<gene>
    <name evidence="2" type="primary">mutM</name>
    <name evidence="2" type="synonym">fpg</name>
    <name type="ordered locus">Sbal223_4269</name>
</gene>
<keyword id="KW-0227">DNA damage</keyword>
<keyword id="KW-0234">DNA repair</keyword>
<keyword id="KW-0238">DNA-binding</keyword>
<keyword id="KW-0326">Glycosidase</keyword>
<keyword id="KW-0378">Hydrolase</keyword>
<keyword id="KW-0456">Lyase</keyword>
<keyword id="KW-0479">Metal-binding</keyword>
<keyword id="KW-0511">Multifunctional enzyme</keyword>
<keyword id="KW-0862">Zinc</keyword>
<keyword id="KW-0863">Zinc-finger</keyword>
<dbReference type="EC" id="3.2.2.23" evidence="2"/>
<dbReference type="EC" id="4.2.99.18" evidence="2"/>
<dbReference type="EMBL" id="CP001252">
    <property type="protein sequence ID" value="ACK48735.1"/>
    <property type="molecule type" value="Genomic_DNA"/>
</dbReference>
<dbReference type="RefSeq" id="WP_006084728.1">
    <property type="nucleotide sequence ID" value="NC_011663.1"/>
</dbReference>
<dbReference type="SMR" id="B8EDQ9"/>
<dbReference type="GeneID" id="11774418"/>
<dbReference type="KEGG" id="sbp:Sbal223_4269"/>
<dbReference type="HOGENOM" id="CLU_038423_1_1_6"/>
<dbReference type="Proteomes" id="UP000002507">
    <property type="component" value="Chromosome"/>
</dbReference>
<dbReference type="GO" id="GO:0034039">
    <property type="term" value="F:8-oxo-7,8-dihydroguanine DNA N-glycosylase activity"/>
    <property type="evidence" value="ECO:0007669"/>
    <property type="project" value="TreeGrafter"/>
</dbReference>
<dbReference type="GO" id="GO:0140078">
    <property type="term" value="F:class I DNA-(apurinic or apyrimidinic site) endonuclease activity"/>
    <property type="evidence" value="ECO:0007669"/>
    <property type="project" value="UniProtKB-EC"/>
</dbReference>
<dbReference type="GO" id="GO:0003684">
    <property type="term" value="F:damaged DNA binding"/>
    <property type="evidence" value="ECO:0007669"/>
    <property type="project" value="InterPro"/>
</dbReference>
<dbReference type="GO" id="GO:0008270">
    <property type="term" value="F:zinc ion binding"/>
    <property type="evidence" value="ECO:0007669"/>
    <property type="project" value="UniProtKB-UniRule"/>
</dbReference>
<dbReference type="GO" id="GO:0006284">
    <property type="term" value="P:base-excision repair"/>
    <property type="evidence" value="ECO:0007669"/>
    <property type="project" value="InterPro"/>
</dbReference>
<dbReference type="CDD" id="cd08966">
    <property type="entry name" value="EcFpg-like_N"/>
    <property type="match status" value="1"/>
</dbReference>
<dbReference type="FunFam" id="1.10.8.50:FF:000003">
    <property type="entry name" value="Formamidopyrimidine-DNA glycosylase"/>
    <property type="match status" value="1"/>
</dbReference>
<dbReference type="FunFam" id="3.20.190.10:FF:000001">
    <property type="entry name" value="Formamidopyrimidine-DNA glycosylase"/>
    <property type="match status" value="1"/>
</dbReference>
<dbReference type="Gene3D" id="1.10.8.50">
    <property type="match status" value="1"/>
</dbReference>
<dbReference type="Gene3D" id="3.20.190.10">
    <property type="entry name" value="MutM-like, N-terminal"/>
    <property type="match status" value="1"/>
</dbReference>
<dbReference type="HAMAP" id="MF_00103">
    <property type="entry name" value="Fapy_DNA_glycosyl"/>
    <property type="match status" value="1"/>
</dbReference>
<dbReference type="InterPro" id="IPR015886">
    <property type="entry name" value="DNA_glyclase/AP_lyase_DNA-bd"/>
</dbReference>
<dbReference type="InterPro" id="IPR015887">
    <property type="entry name" value="DNA_glyclase_Znf_dom_DNA_BS"/>
</dbReference>
<dbReference type="InterPro" id="IPR020629">
    <property type="entry name" value="Formamido-pyr_DNA_Glyclase"/>
</dbReference>
<dbReference type="InterPro" id="IPR012319">
    <property type="entry name" value="FPG_cat"/>
</dbReference>
<dbReference type="InterPro" id="IPR035937">
    <property type="entry name" value="MutM-like_N-ter"/>
</dbReference>
<dbReference type="InterPro" id="IPR010979">
    <property type="entry name" value="Ribosomal_uS13-like_H2TH"/>
</dbReference>
<dbReference type="InterPro" id="IPR000214">
    <property type="entry name" value="Znf_DNA_glyclase/AP_lyase"/>
</dbReference>
<dbReference type="InterPro" id="IPR010663">
    <property type="entry name" value="Znf_FPG/IleRS"/>
</dbReference>
<dbReference type="NCBIfam" id="TIGR00577">
    <property type="entry name" value="fpg"/>
    <property type="match status" value="1"/>
</dbReference>
<dbReference type="NCBIfam" id="NF002211">
    <property type="entry name" value="PRK01103.1"/>
    <property type="match status" value="1"/>
</dbReference>
<dbReference type="PANTHER" id="PTHR22993">
    <property type="entry name" value="FORMAMIDOPYRIMIDINE-DNA GLYCOSYLASE"/>
    <property type="match status" value="1"/>
</dbReference>
<dbReference type="PANTHER" id="PTHR22993:SF9">
    <property type="entry name" value="FORMAMIDOPYRIMIDINE-DNA GLYCOSYLASE"/>
    <property type="match status" value="1"/>
</dbReference>
<dbReference type="Pfam" id="PF01149">
    <property type="entry name" value="Fapy_DNA_glyco"/>
    <property type="match status" value="1"/>
</dbReference>
<dbReference type="Pfam" id="PF06831">
    <property type="entry name" value="H2TH"/>
    <property type="match status" value="1"/>
</dbReference>
<dbReference type="Pfam" id="PF06827">
    <property type="entry name" value="zf-FPG_IleRS"/>
    <property type="match status" value="1"/>
</dbReference>
<dbReference type="SMART" id="SM00898">
    <property type="entry name" value="Fapy_DNA_glyco"/>
    <property type="match status" value="1"/>
</dbReference>
<dbReference type="SMART" id="SM01232">
    <property type="entry name" value="H2TH"/>
    <property type="match status" value="1"/>
</dbReference>
<dbReference type="SUPFAM" id="SSF57716">
    <property type="entry name" value="Glucocorticoid receptor-like (DNA-binding domain)"/>
    <property type="match status" value="1"/>
</dbReference>
<dbReference type="SUPFAM" id="SSF81624">
    <property type="entry name" value="N-terminal domain of MutM-like DNA repair proteins"/>
    <property type="match status" value="1"/>
</dbReference>
<dbReference type="SUPFAM" id="SSF46946">
    <property type="entry name" value="S13-like H2TH domain"/>
    <property type="match status" value="1"/>
</dbReference>
<dbReference type="PROSITE" id="PS51068">
    <property type="entry name" value="FPG_CAT"/>
    <property type="match status" value="1"/>
</dbReference>
<dbReference type="PROSITE" id="PS01242">
    <property type="entry name" value="ZF_FPG_1"/>
    <property type="match status" value="1"/>
</dbReference>
<dbReference type="PROSITE" id="PS51066">
    <property type="entry name" value="ZF_FPG_2"/>
    <property type="match status" value="1"/>
</dbReference>
<comment type="function">
    <text evidence="2">Involved in base excision repair of DNA damaged by oxidation or by mutagenic agents. Acts as a DNA glycosylase that recognizes and removes damaged bases. Has a preference for oxidized purines, such as 7,8-dihydro-8-oxoguanine (8-oxoG). Has AP (apurinic/apyrimidinic) lyase activity and introduces nicks in the DNA strand. Cleaves the DNA backbone by beta-delta elimination to generate a single-strand break at the site of the removed base with both 3'- and 5'-phosphates.</text>
</comment>
<comment type="catalytic activity">
    <reaction evidence="2">
        <text>Hydrolysis of DNA containing ring-opened 7-methylguanine residues, releasing 2,6-diamino-4-hydroxy-5-(N-methyl)formamidopyrimidine.</text>
        <dbReference type="EC" id="3.2.2.23"/>
    </reaction>
</comment>
<comment type="catalytic activity">
    <reaction evidence="2">
        <text>2'-deoxyribonucleotide-(2'-deoxyribose 5'-phosphate)-2'-deoxyribonucleotide-DNA = a 3'-end 2'-deoxyribonucleotide-(2,3-dehydro-2,3-deoxyribose 5'-phosphate)-DNA + a 5'-end 5'-phospho-2'-deoxyribonucleoside-DNA + H(+)</text>
        <dbReference type="Rhea" id="RHEA:66592"/>
        <dbReference type="Rhea" id="RHEA-COMP:13180"/>
        <dbReference type="Rhea" id="RHEA-COMP:16897"/>
        <dbReference type="Rhea" id="RHEA-COMP:17067"/>
        <dbReference type="ChEBI" id="CHEBI:15378"/>
        <dbReference type="ChEBI" id="CHEBI:136412"/>
        <dbReference type="ChEBI" id="CHEBI:157695"/>
        <dbReference type="ChEBI" id="CHEBI:167181"/>
        <dbReference type="EC" id="4.2.99.18"/>
    </reaction>
</comment>
<comment type="cofactor">
    <cofactor evidence="2">
        <name>Zn(2+)</name>
        <dbReference type="ChEBI" id="CHEBI:29105"/>
    </cofactor>
    <text evidence="2">Binds 1 zinc ion per subunit.</text>
</comment>
<comment type="subunit">
    <text evidence="2">Monomer.</text>
</comment>
<comment type="similarity">
    <text evidence="2">Belongs to the FPG family.</text>
</comment>
<sequence length="271" mass="29743">MPELPEVEVTRQGIAPFLVEQTVVDLVIRNGSLRWPVPDIAKQIIGQVIRQVRRRAKYLLIDTDAGTSIVHLGMSGSLRILPHDTPVEKHDHIDLVLANGRILRFNDPRRFGAWLWCELPEEAHPLLAKLGPEPLTNAFNVTQLAAALAGKKKAIKLCLMDNHIVVGVGNIYANEALFAAGIHPEAEAGKIDIERLTVLVAEVKQILAHAIKQGGTTLKDFTNADGKPGYFAQKLHVYSRGGETCTSCGNLLSEIRLGQRTTVFCGICQTR</sequence>
<reference key="1">
    <citation type="submission" date="2008-12" db="EMBL/GenBank/DDBJ databases">
        <title>Complete sequence of chromosome of Shewanella baltica OS223.</title>
        <authorList>
            <consortium name="US DOE Joint Genome Institute"/>
            <person name="Lucas S."/>
            <person name="Copeland A."/>
            <person name="Lapidus A."/>
            <person name="Glavina del Rio T."/>
            <person name="Dalin E."/>
            <person name="Tice H."/>
            <person name="Bruce D."/>
            <person name="Goodwin L."/>
            <person name="Pitluck S."/>
            <person name="Chertkov O."/>
            <person name="Meincke L."/>
            <person name="Brettin T."/>
            <person name="Detter J.C."/>
            <person name="Han C."/>
            <person name="Kuske C.R."/>
            <person name="Larimer F."/>
            <person name="Land M."/>
            <person name="Hauser L."/>
            <person name="Kyrpides N."/>
            <person name="Ovchinnikova G."/>
            <person name="Brettar I."/>
            <person name="Rodrigues J."/>
            <person name="Konstantinidis K."/>
            <person name="Tiedje J."/>
        </authorList>
    </citation>
    <scope>NUCLEOTIDE SEQUENCE [LARGE SCALE GENOMIC DNA]</scope>
    <source>
        <strain>OS223</strain>
    </source>
</reference>
<proteinExistence type="inferred from homology"/>
<feature type="initiator methionine" description="Removed" evidence="1">
    <location>
        <position position="1"/>
    </location>
</feature>
<feature type="chain" id="PRO_1000118902" description="Formamidopyrimidine-DNA glycosylase">
    <location>
        <begin position="2"/>
        <end position="271"/>
    </location>
</feature>
<feature type="zinc finger region" description="FPG-type" evidence="2">
    <location>
        <begin position="236"/>
        <end position="270"/>
    </location>
</feature>
<feature type="active site" description="Schiff-base intermediate with DNA" evidence="2">
    <location>
        <position position="2"/>
    </location>
</feature>
<feature type="active site" description="Proton donor" evidence="2">
    <location>
        <position position="3"/>
    </location>
</feature>
<feature type="active site" description="Proton donor; for beta-elimination activity" evidence="2">
    <location>
        <position position="57"/>
    </location>
</feature>
<feature type="active site" description="Proton donor; for delta-elimination activity" evidence="2">
    <location>
        <position position="260"/>
    </location>
</feature>
<feature type="binding site" evidence="2">
    <location>
        <position position="90"/>
    </location>
    <ligand>
        <name>DNA</name>
        <dbReference type="ChEBI" id="CHEBI:16991"/>
    </ligand>
</feature>
<feature type="binding site" evidence="2">
    <location>
        <position position="109"/>
    </location>
    <ligand>
        <name>DNA</name>
        <dbReference type="ChEBI" id="CHEBI:16991"/>
    </ligand>
</feature>
<feature type="binding site" evidence="2">
    <location>
        <position position="151"/>
    </location>
    <ligand>
        <name>DNA</name>
        <dbReference type="ChEBI" id="CHEBI:16991"/>
    </ligand>
</feature>
<protein>
    <recommendedName>
        <fullName evidence="2">Formamidopyrimidine-DNA glycosylase</fullName>
        <shortName evidence="2">Fapy-DNA glycosylase</shortName>
        <ecNumber evidence="2">3.2.2.23</ecNumber>
    </recommendedName>
    <alternativeName>
        <fullName evidence="2">DNA-(apurinic or apyrimidinic site) lyase MutM</fullName>
        <shortName evidence="2">AP lyase MutM</shortName>
        <ecNumber evidence="2">4.2.99.18</ecNumber>
    </alternativeName>
</protein>
<accession>B8EDQ9</accession>
<organism>
    <name type="scientific">Shewanella baltica (strain OS223)</name>
    <dbReference type="NCBI Taxonomy" id="407976"/>
    <lineage>
        <taxon>Bacteria</taxon>
        <taxon>Pseudomonadati</taxon>
        <taxon>Pseudomonadota</taxon>
        <taxon>Gammaproteobacteria</taxon>
        <taxon>Alteromonadales</taxon>
        <taxon>Shewanellaceae</taxon>
        <taxon>Shewanella</taxon>
    </lineage>
</organism>
<name>FPG_SHEB2</name>
<evidence type="ECO:0000250" key="1"/>
<evidence type="ECO:0000255" key="2">
    <source>
        <dbReference type="HAMAP-Rule" id="MF_00103"/>
    </source>
</evidence>